<comment type="function">
    <text evidence="6 7 8 9">Dehydrogenase; part of the Tox1A locus, one of the 2 loci that mediate the biosynthesis of T-toxin, a family of linear polyketides 37 to 45 carbons in length, of which the major component is 41 carbons, and which leads to high virulence to maize (PubMed:20192833, PubMed:8953776). One of the PKSs (PKS1 or PKS2) could synthesize a precursor, used subsequently by the other PKS as starter unit, to add additional carbons (PubMed:16529376). Variability in the length of the final carbon backbone C35-47 could be achieved by varying the number of condensation cycles, or use of different starter or extender units or might be due to decarboxylation of the penultimate product, catalyzed by DEC1 (PubMed:12236595). Additional proteins are required for the biosynthesis of T-toxin, including oxidoreductases RED1, RED2, RED3, LAM1 and OXI1, as well as esterase TOX9 (PubMed:20192833).</text>
</comment>
<comment type="catalytic activity">
    <reaction evidence="5">
        <text>a primary alcohol + NAD(+) = an aldehyde + NADH + H(+)</text>
        <dbReference type="Rhea" id="RHEA:10736"/>
        <dbReference type="ChEBI" id="CHEBI:15378"/>
        <dbReference type="ChEBI" id="CHEBI:15734"/>
        <dbReference type="ChEBI" id="CHEBI:17478"/>
        <dbReference type="ChEBI" id="CHEBI:57540"/>
        <dbReference type="ChEBI" id="CHEBI:57945"/>
        <dbReference type="EC" id="1.1.1.1"/>
    </reaction>
</comment>
<comment type="catalytic activity">
    <reaction evidence="5">
        <text>a secondary alcohol + NAD(+) = a ketone + NADH + H(+)</text>
        <dbReference type="Rhea" id="RHEA:10740"/>
        <dbReference type="ChEBI" id="CHEBI:15378"/>
        <dbReference type="ChEBI" id="CHEBI:17087"/>
        <dbReference type="ChEBI" id="CHEBI:35681"/>
        <dbReference type="ChEBI" id="CHEBI:57540"/>
        <dbReference type="ChEBI" id="CHEBI:57945"/>
        <dbReference type="EC" id="1.1.1.1"/>
    </reaction>
</comment>
<comment type="pathway">
    <text evidence="8">Mycotoxin biosynthesis.</text>
</comment>
<comment type="disruption phenotype">
    <text evidence="8">Significantly reduces the production of T-toxin and decreases the virulence to maize (PubMed:20192833).</text>
</comment>
<comment type="similarity">
    <text evidence="11">Belongs to the short-chain dehydrogenases/reductases (SDR) family.</text>
</comment>
<proteinExistence type="inferred from homology"/>
<evidence type="ECO:0000250" key="1">
    <source>
        <dbReference type="UniProtKB" id="L0E2Z4"/>
    </source>
</evidence>
<evidence type="ECO:0000250" key="2">
    <source>
        <dbReference type="UniProtKB" id="O93868"/>
    </source>
</evidence>
<evidence type="ECO:0000255" key="3"/>
<evidence type="ECO:0000255" key="4">
    <source>
        <dbReference type="PROSITE-ProRule" id="PRU00498"/>
    </source>
</evidence>
<evidence type="ECO:0000255" key="5">
    <source>
        <dbReference type="PROSITE-ProRule" id="PRU10001"/>
    </source>
</evidence>
<evidence type="ECO:0000269" key="6">
    <source>
    </source>
</evidence>
<evidence type="ECO:0000269" key="7">
    <source>
    </source>
</evidence>
<evidence type="ECO:0000269" key="8">
    <source>
    </source>
</evidence>
<evidence type="ECO:0000269" key="9">
    <source>
    </source>
</evidence>
<evidence type="ECO:0000303" key="10">
    <source>
    </source>
</evidence>
<evidence type="ECO:0000305" key="11"/>
<protein>
    <recommendedName>
        <fullName evidence="11">Dehydrogenase OXI1</fullName>
        <ecNumber evidence="5">1.1.1.1</ecNumber>
    </recommendedName>
    <alternativeName>
        <fullName evidence="11">T-toxin biosynthesis protein OXI1</fullName>
    </alternativeName>
</protein>
<accession>N4WE73</accession>
<accession>D2SZX7</accession>
<keyword id="KW-0325">Glycoprotein</keyword>
<keyword id="KW-0521">NADP</keyword>
<keyword id="KW-0560">Oxidoreductase</keyword>
<keyword id="KW-0732">Signal</keyword>
<gene>
    <name evidence="10" type="primary">OXI1</name>
    <name type="ORF">COCC4DRAFT_155491</name>
</gene>
<name>OXI1_COCH4</name>
<feature type="signal peptide" evidence="3">
    <location>
        <begin position="1"/>
        <end position="20"/>
    </location>
</feature>
<feature type="chain" id="PRO_0000437645" description="Dehydrogenase OXI1" evidence="3">
    <location>
        <begin position="21"/>
        <end position="232"/>
    </location>
</feature>
<feature type="active site" description="Proton donor" evidence="2">
    <location>
        <position position="119"/>
    </location>
</feature>
<feature type="active site" description="Proton donor" evidence="2">
    <location>
        <position position="121"/>
    </location>
</feature>
<feature type="active site" description="Proton acceptor" evidence="5">
    <location>
        <position position="133"/>
    </location>
</feature>
<feature type="active site" description="Lowers pKa of active site Tyr" evidence="2">
    <location>
        <position position="137"/>
    </location>
</feature>
<feature type="binding site" evidence="1">
    <location>
        <position position="19"/>
    </location>
    <ligand>
        <name>NADP(+)</name>
        <dbReference type="ChEBI" id="CHEBI:58349"/>
    </ligand>
</feature>
<feature type="binding site" evidence="1">
    <location>
        <position position="42"/>
    </location>
    <ligand>
        <name>NADP(+)</name>
        <dbReference type="ChEBI" id="CHEBI:58349"/>
    </ligand>
</feature>
<feature type="binding site" evidence="2">
    <location>
        <position position="70"/>
    </location>
    <ligand>
        <name>NADP(+)</name>
        <dbReference type="ChEBI" id="CHEBI:58349"/>
    </ligand>
</feature>
<feature type="binding site" evidence="1">
    <location>
        <position position="103"/>
    </location>
    <ligand>
        <name>NADP(+)</name>
        <dbReference type="ChEBI" id="CHEBI:58349"/>
    </ligand>
</feature>
<feature type="binding site" evidence="2">
    <location>
        <position position="133"/>
    </location>
    <ligand>
        <name>NADP(+)</name>
        <dbReference type="ChEBI" id="CHEBI:58349"/>
    </ligand>
</feature>
<feature type="binding site" evidence="2">
    <location>
        <position position="137"/>
    </location>
    <ligand>
        <name>NADP(+)</name>
        <dbReference type="ChEBI" id="CHEBI:58349"/>
    </ligand>
</feature>
<feature type="binding site" evidence="1">
    <location>
        <position position="168"/>
    </location>
    <ligand>
        <name>NADP(+)</name>
        <dbReference type="ChEBI" id="CHEBI:58349"/>
    </ligand>
</feature>
<feature type="glycosylation site" description="N-linked (GlcNAc...) asparagine" evidence="4">
    <location>
        <position position="28"/>
    </location>
</feature>
<feature type="glycosylation site" description="N-linked (GlcNAc...) asparagine" evidence="4">
    <location>
        <position position="117"/>
    </location>
</feature>
<sequence length="232" mass="24632">MTETFKVAITFVSPSSEALAQSIIDSINKSADTTRAIKIQADMRDTDSPLRIIDATICAFGPNIDILVNNAGVESLVSLSELGLQDFNECIDVNFRAVVFMTKSVIPYLRSPGRIINISSSSAHAGGLSSGIYAASKAAVEALARFWATSLGPQGHSVNTVVPGLTQTDMYERIIAEESSAAYHRTVASMTPMGGRVGTPEDIARIVSLLVEPRSQWVTGQTISATGGLILL</sequence>
<reference key="1">
    <citation type="journal article" date="2010" name="Mol. Plant Microbe Interact.">
        <title>Six new genes required for production of T-toxin, a polyketide determinant of high virulence of Cochliobolus heterostrophus to maize.</title>
        <authorList>
            <person name="Inderbitzin P."/>
            <person name="Asvarak T."/>
            <person name="Turgeon B.G."/>
        </authorList>
    </citation>
    <scope>NUCLEOTIDE SEQUENCE [GENOMIC DNA]</scope>
    <scope>FUNCTION</scope>
    <scope>DISRUPTION PHENOTYPE</scope>
    <source>
        <strain>C4 / ATCC 48331 / race T</strain>
    </source>
</reference>
<reference key="2">
    <citation type="journal article" date="2012" name="PLoS Pathog.">
        <title>Diverse lifestyles and strategies of plant pathogenesis encoded in the genomes of eighteen Dothideomycetes fungi.</title>
        <authorList>
            <person name="Ohm R.A."/>
            <person name="Feau N."/>
            <person name="Henrissat B."/>
            <person name="Schoch C.L."/>
            <person name="Horwitz B.A."/>
            <person name="Barry K.W."/>
            <person name="Condon B.J."/>
            <person name="Copeland A.C."/>
            <person name="Dhillon B."/>
            <person name="Glaser F."/>
            <person name="Hesse C.N."/>
            <person name="Kosti I."/>
            <person name="LaButti K."/>
            <person name="Lindquist E.A."/>
            <person name="Lucas S."/>
            <person name="Salamov A.A."/>
            <person name="Bradshaw R.E."/>
            <person name="Ciuffetti L."/>
            <person name="Hamelin R.C."/>
            <person name="Kema G.H.J."/>
            <person name="Lawrence C."/>
            <person name="Scott J.A."/>
            <person name="Spatafora J.W."/>
            <person name="Turgeon B.G."/>
            <person name="de Wit P.J.G.M."/>
            <person name="Zhong S."/>
            <person name="Goodwin S.B."/>
            <person name="Grigoriev I.V."/>
        </authorList>
    </citation>
    <scope>NUCLEOTIDE SEQUENCE [LARGE SCALE GENOMIC DNA]</scope>
    <source>
        <strain>C4 / ATCC 48331 / race T</strain>
    </source>
</reference>
<reference key="3">
    <citation type="journal article" date="2013" name="PLoS Genet.">
        <title>Comparative genome structure, secondary metabolite, and effector coding capacity across Cochliobolus pathogens.</title>
        <authorList>
            <person name="Condon B.J."/>
            <person name="Leng Y."/>
            <person name="Wu D."/>
            <person name="Bushley K.E."/>
            <person name="Ohm R.A."/>
            <person name="Otillar R."/>
            <person name="Martin J."/>
            <person name="Schackwitz W."/>
            <person name="Grimwood J."/>
            <person name="MohdZainudin N."/>
            <person name="Xue C."/>
            <person name="Wang R."/>
            <person name="Manning V.A."/>
            <person name="Dhillon B."/>
            <person name="Tu Z.J."/>
            <person name="Steffenson B.J."/>
            <person name="Salamov A."/>
            <person name="Sun H."/>
            <person name="Lowry S."/>
            <person name="LaButti K."/>
            <person name="Han J."/>
            <person name="Copeland A."/>
            <person name="Lindquist E."/>
            <person name="Barry K."/>
            <person name="Schmutz J."/>
            <person name="Baker S.E."/>
            <person name="Ciuffetti L.M."/>
            <person name="Grigoriev I.V."/>
            <person name="Zhong S."/>
            <person name="Turgeon B.G."/>
        </authorList>
    </citation>
    <scope>NUCLEOTIDE SEQUENCE [LARGE SCALE GENOMIC DNA]</scope>
    <source>
        <strain>C4 / ATCC 48331 / race T</strain>
    </source>
</reference>
<reference key="4">
    <citation type="journal article" date="1996" name="Plant Cell">
        <title>A polyketide synthase is required for fungal virulence and production of the polyketide T-toxin.</title>
        <authorList>
            <person name="Yang G."/>
            <person name="Rose M.S."/>
            <person name="Turgeon B.G."/>
            <person name="Yoder O.C."/>
        </authorList>
    </citation>
    <scope>FUNCTION</scope>
    <source>
        <strain>C4 / ATCC 48331 / race T</strain>
    </source>
</reference>
<reference key="5">
    <citation type="journal article" date="2002" name="Mol. Plant Microbe Interact.">
        <title>A decarboxylase encoded at the Cochliobolus heterostrophus translocation-associated Tox1B locus is required for polyketide (T-toxin) biosynthesis and high virulence on T-cytoplasm maize.</title>
        <authorList>
            <person name="Rose M.S."/>
            <person name="Yun S.-H."/>
            <person name="Asvarak T."/>
            <person name="Lu S.-W."/>
            <person name="Yoder O.C."/>
            <person name="Turgeon B.G."/>
        </authorList>
    </citation>
    <scope>FUNCTION</scope>
    <source>
        <strain>C4 / ATCC 48331 / race T</strain>
    </source>
</reference>
<reference key="6">
    <citation type="journal article" date="2006" name="Mol. Plant Microbe Interact.">
        <title>Two polyketide synthase-encoding genes are required for biosynthesis of the polyketide virulence factor, T-toxin, by Cochliobolus heterostrophus.</title>
        <authorList>
            <person name="Baker S.E."/>
            <person name="Kroken S."/>
            <person name="Inderbitzin P."/>
            <person name="Asvarak T."/>
            <person name="Li B.Y."/>
            <person name="Shi L."/>
            <person name="Yoder O.C."/>
            <person name="Turgeon B.G."/>
        </authorList>
    </citation>
    <scope>FUNCTION</scope>
</reference>
<organism>
    <name type="scientific">Cochliobolus heterostrophus (strain C4 / ATCC 48331 / race T)</name>
    <name type="common">Southern corn leaf blight fungus</name>
    <name type="synonym">Bipolaris maydis</name>
    <dbReference type="NCBI Taxonomy" id="665024"/>
    <lineage>
        <taxon>Eukaryota</taxon>
        <taxon>Fungi</taxon>
        <taxon>Dikarya</taxon>
        <taxon>Ascomycota</taxon>
        <taxon>Pezizomycotina</taxon>
        <taxon>Dothideomycetes</taxon>
        <taxon>Pleosporomycetidae</taxon>
        <taxon>Pleosporales</taxon>
        <taxon>Pleosporineae</taxon>
        <taxon>Pleosporaceae</taxon>
        <taxon>Bipolaris</taxon>
    </lineage>
</organism>
<dbReference type="EC" id="1.1.1.1" evidence="5"/>
<dbReference type="EMBL" id="FJ943499">
    <property type="protein sequence ID" value="ADB23430.1"/>
    <property type="molecule type" value="Genomic_DNA"/>
</dbReference>
<dbReference type="EMBL" id="KB733545">
    <property type="protein sequence ID" value="ENH98548.1"/>
    <property type="molecule type" value="Genomic_DNA"/>
</dbReference>
<dbReference type="RefSeq" id="XP_014072458.1">
    <property type="nucleotide sequence ID" value="XM_014216983.1"/>
</dbReference>
<dbReference type="SMR" id="N4WE73"/>
<dbReference type="GlyCosmos" id="N4WE73">
    <property type="glycosylation" value="2 sites, No reported glycans"/>
</dbReference>
<dbReference type="GeneID" id="25839391"/>
<dbReference type="HOGENOM" id="CLU_010194_1_3_1"/>
<dbReference type="OrthoDB" id="47007at2759"/>
<dbReference type="PHI-base" id="PHI:2837"/>
<dbReference type="Proteomes" id="UP000012338">
    <property type="component" value="Unassembled WGS sequence"/>
</dbReference>
<dbReference type="GO" id="GO:0004022">
    <property type="term" value="F:alcohol dehydrogenase (NAD+) activity"/>
    <property type="evidence" value="ECO:0007669"/>
    <property type="project" value="UniProtKB-EC"/>
</dbReference>
<dbReference type="Gene3D" id="3.40.50.720">
    <property type="entry name" value="NAD(P)-binding Rossmann-like Domain"/>
    <property type="match status" value="1"/>
</dbReference>
<dbReference type="InterPro" id="IPR036291">
    <property type="entry name" value="NAD(P)-bd_dom_sf"/>
</dbReference>
<dbReference type="InterPro" id="IPR020904">
    <property type="entry name" value="Sc_DH/Rdtase_CS"/>
</dbReference>
<dbReference type="InterPro" id="IPR002347">
    <property type="entry name" value="SDR_fam"/>
</dbReference>
<dbReference type="PANTHER" id="PTHR48107">
    <property type="entry name" value="NADPH-DEPENDENT ALDEHYDE REDUCTASE-LIKE PROTEIN, CHLOROPLASTIC-RELATED"/>
    <property type="match status" value="1"/>
</dbReference>
<dbReference type="PANTHER" id="PTHR48107:SF7">
    <property type="entry name" value="RE15974P"/>
    <property type="match status" value="1"/>
</dbReference>
<dbReference type="Pfam" id="PF13561">
    <property type="entry name" value="adh_short_C2"/>
    <property type="match status" value="1"/>
</dbReference>
<dbReference type="PRINTS" id="PR00081">
    <property type="entry name" value="GDHRDH"/>
</dbReference>
<dbReference type="PRINTS" id="PR00080">
    <property type="entry name" value="SDRFAMILY"/>
</dbReference>
<dbReference type="SUPFAM" id="SSF51735">
    <property type="entry name" value="NAD(P)-binding Rossmann-fold domains"/>
    <property type="match status" value="1"/>
</dbReference>
<dbReference type="PROSITE" id="PS00061">
    <property type="entry name" value="ADH_SHORT"/>
    <property type="match status" value="1"/>
</dbReference>